<gene>
    <name type="primary">dapB</name>
    <name type="ORF">PTRG_07545</name>
</gene>
<reference key="1">
    <citation type="journal article" date="2013" name="G3 (Bethesda)">
        <title>Comparative genomics of a plant-pathogenic fungus, Pyrenophora tritici-repentis, reveals transduplication and the impact of repeat elements on pathogenicity and population divergence.</title>
        <authorList>
            <person name="Manning V.A."/>
            <person name="Pandelova I."/>
            <person name="Dhillon B."/>
            <person name="Wilhelm L.J."/>
            <person name="Goodwin S.B."/>
            <person name="Berlin A.M."/>
            <person name="Figueroa M."/>
            <person name="Freitag M."/>
            <person name="Hane J.K."/>
            <person name="Henrissat B."/>
            <person name="Holman W.H."/>
            <person name="Kodira C.D."/>
            <person name="Martin J."/>
            <person name="Oliver R.P."/>
            <person name="Robbertse B."/>
            <person name="Schackwitz W."/>
            <person name="Schwartz D.C."/>
            <person name="Spatafora J.W."/>
            <person name="Turgeon B.G."/>
            <person name="Yandava C."/>
            <person name="Young S."/>
            <person name="Zhou S."/>
            <person name="Zeng Q."/>
            <person name="Grigoriev I.V."/>
            <person name="Ma L.-J."/>
            <person name="Ciuffetti L.M."/>
        </authorList>
    </citation>
    <scope>NUCLEOTIDE SEQUENCE [LARGE SCALE GENOMIC DNA]</scope>
    <source>
        <strain>Pt-1C-BFP</strain>
    </source>
</reference>
<organism>
    <name type="scientific">Pyrenophora tritici-repentis (strain Pt-1C-BFP)</name>
    <name type="common">Wheat tan spot fungus</name>
    <name type="synonym">Drechslera tritici-repentis</name>
    <dbReference type="NCBI Taxonomy" id="426418"/>
    <lineage>
        <taxon>Eukaryota</taxon>
        <taxon>Fungi</taxon>
        <taxon>Dikarya</taxon>
        <taxon>Ascomycota</taxon>
        <taxon>Pezizomycotina</taxon>
        <taxon>Dothideomycetes</taxon>
        <taxon>Pleosporomycetidae</taxon>
        <taxon>Pleosporales</taxon>
        <taxon>Pleosporineae</taxon>
        <taxon>Pleosporaceae</taxon>
        <taxon>Pyrenophora</taxon>
    </lineage>
</organism>
<feature type="chain" id="PRO_0000412160" description="Probable dipeptidyl-aminopeptidase B">
    <location>
        <begin position="1"/>
        <end position="880"/>
    </location>
</feature>
<feature type="topological domain" description="Cytoplasmic" evidence="2">
    <location>
        <begin position="1"/>
        <end position="93"/>
    </location>
</feature>
<feature type="transmembrane region" description="Helical; Signal-anchor for type II membrane protein" evidence="2">
    <location>
        <begin position="94"/>
        <end position="114"/>
    </location>
</feature>
<feature type="topological domain" description="Vacuolar" evidence="2">
    <location>
        <begin position="115"/>
        <end position="880"/>
    </location>
</feature>
<feature type="region of interest" description="Disordered" evidence="3">
    <location>
        <begin position="1"/>
        <end position="71"/>
    </location>
</feature>
<feature type="compositionally biased region" description="Basic and acidic residues" evidence="3">
    <location>
        <begin position="1"/>
        <end position="26"/>
    </location>
</feature>
<feature type="compositionally biased region" description="Low complexity" evidence="3">
    <location>
        <begin position="30"/>
        <end position="40"/>
    </location>
</feature>
<feature type="active site" description="Charge relay system" evidence="1">
    <location>
        <position position="724"/>
    </location>
</feature>
<feature type="active site" description="Charge relay system" evidence="1">
    <location>
        <position position="801"/>
    </location>
</feature>
<feature type="active site" description="Charge relay system" evidence="1">
    <location>
        <position position="834"/>
    </location>
</feature>
<feature type="glycosylation site" description="N-linked (GlcNAc...) asparagine" evidence="2">
    <location>
        <position position="533"/>
    </location>
</feature>
<feature type="glycosylation site" description="N-linked (GlcNAc...) asparagine" evidence="2">
    <location>
        <position position="778"/>
    </location>
</feature>
<proteinExistence type="inferred from homology"/>
<name>DAPB_PYRTR</name>
<keyword id="KW-0031">Aminopeptidase</keyword>
<keyword id="KW-0325">Glycoprotein</keyword>
<keyword id="KW-0378">Hydrolase</keyword>
<keyword id="KW-0472">Membrane</keyword>
<keyword id="KW-0645">Protease</keyword>
<keyword id="KW-1185">Reference proteome</keyword>
<keyword id="KW-0720">Serine protease</keyword>
<keyword id="KW-0735">Signal-anchor</keyword>
<keyword id="KW-0812">Transmembrane</keyword>
<keyword id="KW-1133">Transmembrane helix</keyword>
<keyword id="KW-0926">Vacuole</keyword>
<evidence type="ECO:0000250" key="1"/>
<evidence type="ECO:0000255" key="2"/>
<evidence type="ECO:0000256" key="3">
    <source>
        <dbReference type="SAM" id="MobiDB-lite"/>
    </source>
</evidence>
<evidence type="ECO:0000305" key="4"/>
<protein>
    <recommendedName>
        <fullName>Probable dipeptidyl-aminopeptidase B</fullName>
        <shortName>DPAP B</shortName>
        <ecNumber>3.4.14.5</ecNumber>
    </recommendedName>
</protein>
<sequence length="880" mass="99739">MPRQRAPKEEEAELLTKQERSARSSEDASDTSISSISTTSLVLEHINDPAINGTSRSRRGEKYTDEDDEAQEAFDVEGGRYKSPISVDKKTRRWLWIVGIACVTGWALALVFFLMSGSYKHVSTRPHDPLASSTKGSGKKITMDDVFGGRFYAREQSLKWIAGPNGEDGLLLERDAGNAEYLVVEDIRNKGDGDSSAKKTKLMQKSGFNVNGYFVRPVEVWPSKDFKKTGEPLDPENQDGRVQLASLSPQSDAVVFTRNNNMYLRKLDSKEVIQITRDGGSELFYGIPDWVYEEEVFQTNSATWWSEDGKYIAFLRTDESTVPTYPVQYFVSRPSGDKPKAGEENYPEVRNIKYPKAGAPNPIVTLQFYDVEKAEVFSVEIEDDFRDNNRLITEIVWAGKTKQVLVRETNRESDILKVVLMDVEKRTGKTVRTENVAELDGGWFEVSQKTTFVPADPANGRKDDGYIDTIIHEGYDHIGYFTPLDNDKPIVLSQGEWEVVDAPSRVDLKNNIVYYISTAKSSMERHAYSVFLNGTGTSEVVENSGSGYYGASFSAGGSYALITYQGPGIPWQKIISTPSSKDKFEKVLEENKALDRFVREREMPILNYQTIEVDGFKLNVLERRPPHFNEKKKYPVLFYQYSGPGSQEVNKKFHVDFQAYIAANLEYIVVTVDGRGTGFLGRKLRCITRGNIGYYEAHDQIAAAKIWASKKYVDADRLAIWGWSYGGFNTLKTLEQDAGQTFKYGMAVAPVTDWRYYDSIYTERYMHTPQNNAAGYNNSTITDVASLAKNTRFLLMHGVADDNVHMQNTLTLLDRLDLAGVENYDVHVFPDSDHSIYFHNANRIVYDKLRWWLINAFNGEWAKIKTAEPKAQVDARMERR</sequence>
<dbReference type="EC" id="3.4.14.5"/>
<dbReference type="EMBL" id="DS231622">
    <property type="protein sequence ID" value="EDU50464.1"/>
    <property type="molecule type" value="Genomic_DNA"/>
</dbReference>
<dbReference type="RefSeq" id="XP_001937877.1">
    <property type="nucleotide sequence ID" value="XM_001937842.1"/>
</dbReference>
<dbReference type="SMR" id="B2WC36"/>
<dbReference type="FunCoup" id="B2WC36">
    <property type="interactions" value="313"/>
</dbReference>
<dbReference type="STRING" id="426418.B2WC36"/>
<dbReference type="ESTHER" id="pyrtr-dapb">
    <property type="family name" value="DPP4N_Peptidase_S9"/>
</dbReference>
<dbReference type="MEROPS" id="S09.006"/>
<dbReference type="GlyCosmos" id="B2WC36">
    <property type="glycosylation" value="2 sites, No reported glycans"/>
</dbReference>
<dbReference type="EnsemblFungi" id="EDU50464">
    <property type="protein sequence ID" value="EDU50464"/>
    <property type="gene ID" value="PTRG_07545"/>
</dbReference>
<dbReference type="eggNOG" id="KOG2100">
    <property type="taxonomic scope" value="Eukaryota"/>
</dbReference>
<dbReference type="HOGENOM" id="CLU_006105_0_1_1"/>
<dbReference type="InParanoid" id="B2WC36"/>
<dbReference type="OMA" id="MRTPQEN"/>
<dbReference type="OrthoDB" id="6071at28556"/>
<dbReference type="Proteomes" id="UP000001471">
    <property type="component" value="Unassembled WGS sequence"/>
</dbReference>
<dbReference type="GO" id="GO:0000329">
    <property type="term" value="C:fungal-type vacuole membrane"/>
    <property type="evidence" value="ECO:0007669"/>
    <property type="project" value="EnsemblFungi"/>
</dbReference>
<dbReference type="GO" id="GO:0005886">
    <property type="term" value="C:plasma membrane"/>
    <property type="evidence" value="ECO:0007669"/>
    <property type="project" value="TreeGrafter"/>
</dbReference>
<dbReference type="GO" id="GO:0004177">
    <property type="term" value="F:aminopeptidase activity"/>
    <property type="evidence" value="ECO:0007669"/>
    <property type="project" value="UniProtKB-KW"/>
</dbReference>
<dbReference type="GO" id="GO:0008239">
    <property type="term" value="F:dipeptidyl-peptidase activity"/>
    <property type="evidence" value="ECO:0007669"/>
    <property type="project" value="UniProtKB-EC"/>
</dbReference>
<dbReference type="GO" id="GO:0008236">
    <property type="term" value="F:serine-type peptidase activity"/>
    <property type="evidence" value="ECO:0007669"/>
    <property type="project" value="UniProtKB-KW"/>
</dbReference>
<dbReference type="GO" id="GO:0006508">
    <property type="term" value="P:proteolysis"/>
    <property type="evidence" value="ECO:0007669"/>
    <property type="project" value="UniProtKB-KW"/>
</dbReference>
<dbReference type="FunFam" id="3.40.50.1820:FF:000003">
    <property type="entry name" value="Dipeptidyl peptidase 4"/>
    <property type="match status" value="1"/>
</dbReference>
<dbReference type="Gene3D" id="3.40.50.1820">
    <property type="entry name" value="alpha/beta hydrolase"/>
    <property type="match status" value="1"/>
</dbReference>
<dbReference type="Gene3D" id="2.140.10.30">
    <property type="entry name" value="Dipeptidylpeptidase IV, N-terminal domain"/>
    <property type="match status" value="1"/>
</dbReference>
<dbReference type="InterPro" id="IPR029058">
    <property type="entry name" value="AB_hydrolase_fold"/>
</dbReference>
<dbReference type="InterPro" id="IPR001375">
    <property type="entry name" value="Peptidase_S9_cat"/>
</dbReference>
<dbReference type="InterPro" id="IPR002469">
    <property type="entry name" value="Peptidase_S9B_N"/>
</dbReference>
<dbReference type="InterPro" id="IPR050278">
    <property type="entry name" value="Serine_Prot_S9B/DPPIV"/>
</dbReference>
<dbReference type="PANTHER" id="PTHR11731:SF200">
    <property type="entry name" value="DIPEPTIDYL PEPTIDASE 10, ISOFORM B"/>
    <property type="match status" value="1"/>
</dbReference>
<dbReference type="PANTHER" id="PTHR11731">
    <property type="entry name" value="PROTEASE FAMILY S9B,C DIPEPTIDYL-PEPTIDASE IV-RELATED"/>
    <property type="match status" value="1"/>
</dbReference>
<dbReference type="Pfam" id="PF00930">
    <property type="entry name" value="DPPIV_N"/>
    <property type="match status" value="1"/>
</dbReference>
<dbReference type="Pfam" id="PF00326">
    <property type="entry name" value="Peptidase_S9"/>
    <property type="match status" value="1"/>
</dbReference>
<dbReference type="SUPFAM" id="SSF53474">
    <property type="entry name" value="alpha/beta-Hydrolases"/>
    <property type="match status" value="1"/>
</dbReference>
<dbReference type="SUPFAM" id="SSF82171">
    <property type="entry name" value="DPP6 N-terminal domain-like"/>
    <property type="match status" value="1"/>
</dbReference>
<comment type="function">
    <text evidence="1">Type IV dipeptidyl-peptidase which removes N-terminal dipeptides sequentially from polypeptides having unsubstituted N-termini provided that the penultimate residue is proline.</text>
</comment>
<comment type="catalytic activity">
    <reaction>
        <text>Release of an N-terminal dipeptide, Xaa-Yaa-|-Zaa-, from a polypeptide, preferentially when Yaa is Pro, provided Zaa is neither Pro nor hydroxyproline.</text>
        <dbReference type="EC" id="3.4.14.5"/>
    </reaction>
</comment>
<comment type="subcellular location">
    <subcellularLocation>
        <location evidence="1">Vacuole membrane</location>
        <topology evidence="1">Single-pass type II membrane protein</topology>
    </subcellularLocation>
    <text evidence="1">Lysosome-like vacuoles.</text>
</comment>
<comment type="similarity">
    <text evidence="4">Belongs to the peptidase S9B family.</text>
</comment>
<accession>B2WC36</accession>